<organism>
    <name type="scientific">Campylobacter lari (strain RM2100 / D67 / ATCC BAA-1060)</name>
    <dbReference type="NCBI Taxonomy" id="306263"/>
    <lineage>
        <taxon>Bacteria</taxon>
        <taxon>Pseudomonadati</taxon>
        <taxon>Campylobacterota</taxon>
        <taxon>Epsilonproteobacteria</taxon>
        <taxon>Campylobacterales</taxon>
        <taxon>Campylobacteraceae</taxon>
        <taxon>Campylobacter</taxon>
    </lineage>
</organism>
<protein>
    <recommendedName>
        <fullName evidence="1">Large ribosomal subunit protein bL12</fullName>
    </recommendedName>
    <alternativeName>
        <fullName evidence="2">50S ribosomal protein L7/L12</fullName>
    </alternativeName>
</protein>
<evidence type="ECO:0000255" key="1">
    <source>
        <dbReference type="HAMAP-Rule" id="MF_00368"/>
    </source>
</evidence>
<evidence type="ECO:0000305" key="2"/>
<name>RL7_CAMLR</name>
<comment type="function">
    <text evidence="1">Forms part of the ribosomal stalk which helps the ribosome interact with GTP-bound translation factors. Is thus essential for accurate translation.</text>
</comment>
<comment type="subunit">
    <text evidence="1">Homodimer. Part of the ribosomal stalk of the 50S ribosomal subunit. Forms a multimeric L10(L12)X complex, where L10 forms an elongated spine to which 2 to 4 L12 dimers bind in a sequential fashion. Binds GTP-bound translation factors.</text>
</comment>
<comment type="similarity">
    <text evidence="1">Belongs to the bacterial ribosomal protein bL12 family.</text>
</comment>
<keyword id="KW-1185">Reference proteome</keyword>
<keyword id="KW-0687">Ribonucleoprotein</keyword>
<keyword id="KW-0689">Ribosomal protein</keyword>
<gene>
    <name evidence="1" type="primary">rplL</name>
    <name type="ordered locus">Cla_0448</name>
</gene>
<proteinExistence type="inferred from homology"/>
<dbReference type="EMBL" id="CP000932">
    <property type="protein sequence ID" value="ACM63801.1"/>
    <property type="molecule type" value="Genomic_DNA"/>
</dbReference>
<dbReference type="RefSeq" id="WP_012661184.1">
    <property type="nucleotide sequence ID" value="NC_012039.1"/>
</dbReference>
<dbReference type="SMR" id="B9KFG6"/>
<dbReference type="STRING" id="306263.Cla_0448"/>
<dbReference type="GeneID" id="93004536"/>
<dbReference type="KEGG" id="cla:CLA_0448"/>
<dbReference type="eggNOG" id="COG0222">
    <property type="taxonomic scope" value="Bacteria"/>
</dbReference>
<dbReference type="HOGENOM" id="CLU_086499_3_0_7"/>
<dbReference type="Proteomes" id="UP000007727">
    <property type="component" value="Chromosome"/>
</dbReference>
<dbReference type="GO" id="GO:0022625">
    <property type="term" value="C:cytosolic large ribosomal subunit"/>
    <property type="evidence" value="ECO:0007669"/>
    <property type="project" value="TreeGrafter"/>
</dbReference>
<dbReference type="GO" id="GO:0003729">
    <property type="term" value="F:mRNA binding"/>
    <property type="evidence" value="ECO:0007669"/>
    <property type="project" value="TreeGrafter"/>
</dbReference>
<dbReference type="GO" id="GO:0003735">
    <property type="term" value="F:structural constituent of ribosome"/>
    <property type="evidence" value="ECO:0007669"/>
    <property type="project" value="InterPro"/>
</dbReference>
<dbReference type="GO" id="GO:0006412">
    <property type="term" value="P:translation"/>
    <property type="evidence" value="ECO:0007669"/>
    <property type="project" value="UniProtKB-UniRule"/>
</dbReference>
<dbReference type="CDD" id="cd00387">
    <property type="entry name" value="Ribosomal_L7_L12"/>
    <property type="match status" value="1"/>
</dbReference>
<dbReference type="FunFam" id="3.30.1390.10:FF:000001">
    <property type="entry name" value="50S ribosomal protein L7/L12"/>
    <property type="match status" value="1"/>
</dbReference>
<dbReference type="Gene3D" id="3.30.1390.10">
    <property type="match status" value="1"/>
</dbReference>
<dbReference type="Gene3D" id="1.20.5.710">
    <property type="entry name" value="Single helix bin"/>
    <property type="match status" value="1"/>
</dbReference>
<dbReference type="HAMAP" id="MF_00368">
    <property type="entry name" value="Ribosomal_bL12"/>
    <property type="match status" value="1"/>
</dbReference>
<dbReference type="InterPro" id="IPR000206">
    <property type="entry name" value="Ribosomal_bL12"/>
</dbReference>
<dbReference type="InterPro" id="IPR013823">
    <property type="entry name" value="Ribosomal_bL12_C"/>
</dbReference>
<dbReference type="InterPro" id="IPR014719">
    <property type="entry name" value="Ribosomal_bL12_C/ClpS-like"/>
</dbReference>
<dbReference type="InterPro" id="IPR008932">
    <property type="entry name" value="Ribosomal_bL12_oligo"/>
</dbReference>
<dbReference type="InterPro" id="IPR036235">
    <property type="entry name" value="Ribosomal_bL12_oligo_N_sf"/>
</dbReference>
<dbReference type="NCBIfam" id="TIGR00855">
    <property type="entry name" value="L12"/>
    <property type="match status" value="1"/>
</dbReference>
<dbReference type="PANTHER" id="PTHR45987">
    <property type="entry name" value="39S RIBOSOMAL PROTEIN L12"/>
    <property type="match status" value="1"/>
</dbReference>
<dbReference type="PANTHER" id="PTHR45987:SF4">
    <property type="entry name" value="LARGE RIBOSOMAL SUBUNIT PROTEIN BL12M"/>
    <property type="match status" value="1"/>
</dbReference>
<dbReference type="Pfam" id="PF00542">
    <property type="entry name" value="Ribosomal_L12"/>
    <property type="match status" value="1"/>
</dbReference>
<dbReference type="Pfam" id="PF16320">
    <property type="entry name" value="Ribosomal_L12_N"/>
    <property type="match status" value="1"/>
</dbReference>
<dbReference type="SUPFAM" id="SSF54736">
    <property type="entry name" value="ClpS-like"/>
    <property type="match status" value="1"/>
</dbReference>
<dbReference type="SUPFAM" id="SSF48300">
    <property type="entry name" value="Ribosomal protein L7/12, oligomerisation (N-terminal) domain"/>
    <property type="match status" value="1"/>
</dbReference>
<sequence>MAITKEDVLEFISNLSVLELSELVKEFEEKFGVSAAPVMVAGAAVAGAAGGAAEEKTEFDIVLQDGGDKKINVIKVVRALTGLGLKEAKDAVEQTPSVLKEGVSKAEAEEAKKQLEEAGAKVELK</sequence>
<feature type="chain" id="PRO_1000195780" description="Large ribosomal subunit protein bL12">
    <location>
        <begin position="1"/>
        <end position="125"/>
    </location>
</feature>
<accession>B9KFG6</accession>
<reference key="1">
    <citation type="journal article" date="2008" name="Foodborne Pathog. Dis.">
        <title>The complete genome sequence and analysis of the human pathogen Campylobacter lari.</title>
        <authorList>
            <person name="Miller W.G."/>
            <person name="Wang G."/>
            <person name="Binnewies T.T."/>
            <person name="Parker C.T."/>
        </authorList>
    </citation>
    <scope>NUCLEOTIDE SEQUENCE [LARGE SCALE GENOMIC DNA]</scope>
    <source>
        <strain>RM2100 / D67 / ATCC BAA-1060</strain>
    </source>
</reference>